<organism>
    <name type="scientific">Wolbachia pipientis wMel</name>
    <dbReference type="NCBI Taxonomy" id="163164"/>
    <lineage>
        <taxon>Bacteria</taxon>
        <taxon>Pseudomonadati</taxon>
        <taxon>Pseudomonadota</taxon>
        <taxon>Alphaproteobacteria</taxon>
        <taxon>Rickettsiales</taxon>
        <taxon>Anaplasmataceae</taxon>
        <taxon>Wolbachieae</taxon>
        <taxon>Wolbachia</taxon>
    </lineage>
</organism>
<sequence length="149" mass="17513">MEVIAENRKARFEYFILEEFEAGMVLLSSEVKSLRERKVNISDAYVVEKNSEVWLHNMHIAEYKAANRKNHKPKRERKLLLHKKEINKLIGQIKTAGITVVPLSVYFNDKGFAKTKIAIVKGKKLYDKRATIKQREWDREKSRLSKNNL</sequence>
<keyword id="KW-0963">Cytoplasm</keyword>
<keyword id="KW-0694">RNA-binding</keyword>
<reference key="1">
    <citation type="journal article" date="2004" name="PLoS Biol.">
        <title>Phylogenomics of the reproductive parasite Wolbachia pipientis wMel: a streamlined genome overrun by mobile genetic elements.</title>
        <authorList>
            <person name="Wu M."/>
            <person name="Sun L.V."/>
            <person name="Vamathevan J.J."/>
            <person name="Riegler M."/>
            <person name="DeBoy R.T."/>
            <person name="Brownlie J.C."/>
            <person name="McGraw E.A."/>
            <person name="Martin W."/>
            <person name="Esser C."/>
            <person name="Ahmadinejad N."/>
            <person name="Wiegand C."/>
            <person name="Madupu R."/>
            <person name="Beanan M.J."/>
            <person name="Brinkac L.M."/>
            <person name="Daugherty S.C."/>
            <person name="Durkin A.S."/>
            <person name="Kolonay J.F."/>
            <person name="Nelson W.C."/>
            <person name="Mohamoud Y."/>
            <person name="Lee P."/>
            <person name="Berry K.J."/>
            <person name="Young M.B."/>
            <person name="Utterback T.R."/>
            <person name="Weidman J.F."/>
            <person name="Nierman W.C."/>
            <person name="Paulsen I.T."/>
            <person name="Nelson K.E."/>
            <person name="Tettelin H."/>
            <person name="O'Neill S.L."/>
            <person name="Eisen J.A."/>
        </authorList>
    </citation>
    <scope>NUCLEOTIDE SEQUENCE [LARGE SCALE GENOMIC DNA]</scope>
</reference>
<dbReference type="EMBL" id="AE017196">
    <property type="protein sequence ID" value="AAS14457.1"/>
    <property type="molecule type" value="Genomic_DNA"/>
</dbReference>
<dbReference type="RefSeq" id="WP_007548863.1">
    <property type="nucleotide sequence ID" value="NZ_OX384529.1"/>
</dbReference>
<dbReference type="SMR" id="Q73H09"/>
<dbReference type="EnsemblBacteria" id="AAS14457">
    <property type="protein sequence ID" value="AAS14457"/>
    <property type="gene ID" value="WD_0767"/>
</dbReference>
<dbReference type="GeneID" id="70036248"/>
<dbReference type="KEGG" id="wol:WD_0767"/>
<dbReference type="eggNOG" id="COG0691">
    <property type="taxonomic scope" value="Bacteria"/>
</dbReference>
<dbReference type="Proteomes" id="UP000008215">
    <property type="component" value="Chromosome"/>
</dbReference>
<dbReference type="GO" id="GO:0005829">
    <property type="term" value="C:cytosol"/>
    <property type="evidence" value="ECO:0007669"/>
    <property type="project" value="TreeGrafter"/>
</dbReference>
<dbReference type="GO" id="GO:0003723">
    <property type="term" value="F:RNA binding"/>
    <property type="evidence" value="ECO:0007669"/>
    <property type="project" value="UniProtKB-UniRule"/>
</dbReference>
<dbReference type="GO" id="GO:0070929">
    <property type="term" value="P:trans-translation"/>
    <property type="evidence" value="ECO:0007669"/>
    <property type="project" value="UniProtKB-UniRule"/>
</dbReference>
<dbReference type="CDD" id="cd09294">
    <property type="entry name" value="SmpB"/>
    <property type="match status" value="1"/>
</dbReference>
<dbReference type="Gene3D" id="2.40.280.10">
    <property type="match status" value="1"/>
</dbReference>
<dbReference type="HAMAP" id="MF_00023">
    <property type="entry name" value="SmpB"/>
    <property type="match status" value="1"/>
</dbReference>
<dbReference type="InterPro" id="IPR023620">
    <property type="entry name" value="SmpB"/>
</dbReference>
<dbReference type="InterPro" id="IPR000037">
    <property type="entry name" value="SsrA-bd_prot"/>
</dbReference>
<dbReference type="NCBIfam" id="NF003843">
    <property type="entry name" value="PRK05422.1"/>
    <property type="match status" value="1"/>
</dbReference>
<dbReference type="NCBIfam" id="TIGR00086">
    <property type="entry name" value="smpB"/>
    <property type="match status" value="1"/>
</dbReference>
<dbReference type="PANTHER" id="PTHR30308:SF2">
    <property type="entry name" value="SSRA-BINDING PROTEIN"/>
    <property type="match status" value="1"/>
</dbReference>
<dbReference type="PANTHER" id="PTHR30308">
    <property type="entry name" value="TMRNA-BINDING COMPONENT OF TRANS-TRANSLATION TAGGING COMPLEX"/>
    <property type="match status" value="1"/>
</dbReference>
<dbReference type="Pfam" id="PF01668">
    <property type="entry name" value="SmpB"/>
    <property type="match status" value="1"/>
</dbReference>
<dbReference type="SUPFAM" id="SSF74982">
    <property type="entry name" value="Small protein B (SmpB)"/>
    <property type="match status" value="1"/>
</dbReference>
<feature type="chain" id="PRO_0000103068" description="SsrA-binding protein">
    <location>
        <begin position="1"/>
        <end position="149"/>
    </location>
</feature>
<evidence type="ECO:0000255" key="1">
    <source>
        <dbReference type="HAMAP-Rule" id="MF_00023"/>
    </source>
</evidence>
<accession>Q73H09</accession>
<proteinExistence type="inferred from homology"/>
<protein>
    <recommendedName>
        <fullName evidence="1">SsrA-binding protein</fullName>
    </recommendedName>
    <alternativeName>
        <fullName evidence="1">Small protein B</fullName>
    </alternativeName>
</protein>
<name>SSRP_WOLPM</name>
<gene>
    <name evidence="1" type="primary">smpB</name>
    <name type="ordered locus">WD_0767</name>
</gene>
<comment type="function">
    <text evidence="1">Required for rescue of stalled ribosomes mediated by trans-translation. Binds to transfer-messenger RNA (tmRNA), required for stable association of tmRNA with ribosomes. tmRNA and SmpB together mimic tRNA shape, replacing the anticodon stem-loop with SmpB. tmRNA is encoded by the ssrA gene; the 2 termini fold to resemble tRNA(Ala) and it encodes a 'tag peptide', a short internal open reading frame. During trans-translation Ala-aminoacylated tmRNA acts like a tRNA, entering the A-site of stalled ribosomes, displacing the stalled mRNA. The ribosome then switches to translate the ORF on the tmRNA; the nascent peptide is terminated with the 'tag peptide' encoded by the tmRNA and targeted for degradation. The ribosome is freed to recommence translation, which seems to be the essential function of trans-translation.</text>
</comment>
<comment type="subcellular location">
    <subcellularLocation>
        <location evidence="1">Cytoplasm</location>
    </subcellularLocation>
    <text evidence="1">The tmRNA-SmpB complex associates with stalled 70S ribosomes.</text>
</comment>
<comment type="similarity">
    <text evidence="1">Belongs to the SmpB family.</text>
</comment>